<sequence length="336" mass="39505">MFVNSDNYIKYLKLWLITLFSLIVLMVAVGGLTRLTDSGLSITAWELFTGILPPMNINEWNFYFTEYKKIPEYKNINYGMSLDEFKVIFYWEYAHRLLARFVGLFTLVPLLFFTLYFKKTLHYSNKYYWIFFLVCLQGFIGWYMVSSGLIENNDVSHFRLSIHLSLALFILCLIFWYILDIHKIKKFENKIPNLFLLFILKLIVLQIVLGAFLSGLDGGLIYNSWPDMNGSFFPNDVSYGDLITTQLFNNPSIIQFLHRSTAYLLLFFIIILNFIYFKKQYDFKYVLFFDVAILFQIFLGIITLISGVEITYASLHQLGSILVLSSYFLILYKNSN</sequence>
<gene>
    <name evidence="1" type="primary">ctaA</name>
    <name type="synonym">coxW</name>
    <name type="ordered locus">SAR11_1031</name>
</gene>
<evidence type="ECO:0000255" key="1">
    <source>
        <dbReference type="HAMAP-Rule" id="MF_01665"/>
    </source>
</evidence>
<accession>Q4FLV1</accession>
<keyword id="KW-1003">Cell membrane</keyword>
<keyword id="KW-0350">Heme biosynthesis</keyword>
<keyword id="KW-0408">Iron</keyword>
<keyword id="KW-0472">Membrane</keyword>
<keyword id="KW-0479">Metal-binding</keyword>
<keyword id="KW-0560">Oxidoreductase</keyword>
<keyword id="KW-1185">Reference proteome</keyword>
<keyword id="KW-0812">Transmembrane</keyword>
<keyword id="KW-1133">Transmembrane helix</keyword>
<feature type="chain" id="PRO_0000349059" description="Heme A synthase">
    <location>
        <begin position="1"/>
        <end position="336"/>
    </location>
</feature>
<feature type="transmembrane region" description="Helical" evidence="1">
    <location>
        <begin position="12"/>
        <end position="32"/>
    </location>
</feature>
<feature type="transmembrane region" description="Helical" evidence="1">
    <location>
        <begin position="97"/>
        <end position="117"/>
    </location>
</feature>
<feature type="transmembrane region" description="Helical" evidence="1">
    <location>
        <begin position="130"/>
        <end position="150"/>
    </location>
</feature>
<feature type="transmembrane region" description="Helical" evidence="1">
    <location>
        <begin position="161"/>
        <end position="181"/>
    </location>
</feature>
<feature type="transmembrane region" description="Helical" evidence="1">
    <location>
        <begin position="194"/>
        <end position="214"/>
    </location>
</feature>
<feature type="transmembrane region" description="Helical" evidence="1">
    <location>
        <begin position="256"/>
        <end position="276"/>
    </location>
</feature>
<feature type="transmembrane region" description="Helical" evidence="1">
    <location>
        <begin position="285"/>
        <end position="305"/>
    </location>
</feature>
<feature type="transmembrane region" description="Helical" evidence="1">
    <location>
        <begin position="310"/>
        <end position="330"/>
    </location>
</feature>
<feature type="binding site" description="axial binding residue" evidence="1">
    <location>
        <position position="258"/>
    </location>
    <ligand>
        <name>heme</name>
        <dbReference type="ChEBI" id="CHEBI:30413"/>
    </ligand>
    <ligandPart>
        <name>Fe</name>
        <dbReference type="ChEBI" id="CHEBI:18248"/>
    </ligandPart>
</feature>
<feature type="binding site" description="axial binding residue" evidence="1">
    <location>
        <position position="316"/>
    </location>
    <ligand>
        <name>heme</name>
        <dbReference type="ChEBI" id="CHEBI:30413"/>
    </ligand>
    <ligandPart>
        <name>Fe</name>
        <dbReference type="ChEBI" id="CHEBI:18248"/>
    </ligandPart>
</feature>
<name>CTAA_PELUB</name>
<comment type="function">
    <text evidence="1">Catalyzes the conversion of heme O to heme A by two successive hydroxylations of the methyl group at C8. The first hydroxylation forms heme I, the second hydroxylation results in an unstable dihydroxymethyl group, which spontaneously dehydrates, resulting in the formyl group of heme A.</text>
</comment>
<comment type="catalytic activity">
    <reaction evidence="1">
        <text>Fe(II)-heme o + 2 A + H2O = Fe(II)-heme a + 2 AH2</text>
        <dbReference type="Rhea" id="RHEA:63388"/>
        <dbReference type="ChEBI" id="CHEBI:13193"/>
        <dbReference type="ChEBI" id="CHEBI:15377"/>
        <dbReference type="ChEBI" id="CHEBI:17499"/>
        <dbReference type="ChEBI" id="CHEBI:60530"/>
        <dbReference type="ChEBI" id="CHEBI:61715"/>
        <dbReference type="EC" id="1.17.99.9"/>
    </reaction>
    <physiologicalReaction direction="left-to-right" evidence="1">
        <dbReference type="Rhea" id="RHEA:63389"/>
    </physiologicalReaction>
</comment>
<comment type="cofactor">
    <cofactor evidence="1">
        <name>heme b</name>
        <dbReference type="ChEBI" id="CHEBI:60344"/>
    </cofactor>
</comment>
<comment type="pathway">
    <text evidence="1">Porphyrin-containing compound metabolism; heme A biosynthesis; heme A from heme O: step 1/1.</text>
</comment>
<comment type="subunit">
    <text evidence="1">Interacts with CtaB.</text>
</comment>
<comment type="subcellular location">
    <subcellularLocation>
        <location evidence="1">Cell membrane</location>
        <topology evidence="1">Multi-pass membrane protein</topology>
    </subcellularLocation>
</comment>
<comment type="similarity">
    <text evidence="1">Belongs to the COX15/CtaA family. Type 2 subfamily.</text>
</comment>
<proteinExistence type="inferred from homology"/>
<protein>
    <recommendedName>
        <fullName evidence="1">Heme A synthase</fullName>
        <shortName evidence="1">HAS</shortName>
        <ecNumber evidence="1">1.17.99.9</ecNumber>
    </recommendedName>
    <alternativeName>
        <fullName evidence="1">Cytochrome aa3-controlling protein</fullName>
    </alternativeName>
</protein>
<dbReference type="EC" id="1.17.99.9" evidence="1"/>
<dbReference type="EMBL" id="CP000084">
    <property type="protein sequence ID" value="AAZ21837.1"/>
    <property type="molecule type" value="Genomic_DNA"/>
</dbReference>
<dbReference type="RefSeq" id="WP_011282124.1">
    <property type="nucleotide sequence ID" value="NC_007205.1"/>
</dbReference>
<dbReference type="SMR" id="Q4FLV1"/>
<dbReference type="STRING" id="335992.SAR11_1031"/>
<dbReference type="GeneID" id="66295522"/>
<dbReference type="KEGG" id="pub:SAR11_1031"/>
<dbReference type="eggNOG" id="COG1612">
    <property type="taxonomic scope" value="Bacteria"/>
</dbReference>
<dbReference type="HOGENOM" id="CLU_017627_0_0_5"/>
<dbReference type="OrthoDB" id="9793156at2"/>
<dbReference type="UniPathway" id="UPA00269">
    <property type="reaction ID" value="UER00713"/>
</dbReference>
<dbReference type="Proteomes" id="UP000002528">
    <property type="component" value="Chromosome"/>
</dbReference>
<dbReference type="GO" id="GO:0005886">
    <property type="term" value="C:plasma membrane"/>
    <property type="evidence" value="ECO:0007669"/>
    <property type="project" value="UniProtKB-SubCell"/>
</dbReference>
<dbReference type="GO" id="GO:0046872">
    <property type="term" value="F:metal ion binding"/>
    <property type="evidence" value="ECO:0007669"/>
    <property type="project" value="UniProtKB-KW"/>
</dbReference>
<dbReference type="GO" id="GO:0016653">
    <property type="term" value="F:oxidoreductase activity, acting on NAD(P)H, heme protein as acceptor"/>
    <property type="evidence" value="ECO:0007669"/>
    <property type="project" value="InterPro"/>
</dbReference>
<dbReference type="GO" id="GO:0006784">
    <property type="term" value="P:heme A biosynthetic process"/>
    <property type="evidence" value="ECO:0007669"/>
    <property type="project" value="UniProtKB-UniRule"/>
</dbReference>
<dbReference type="HAMAP" id="MF_01665">
    <property type="entry name" value="HemeA_synth_type2"/>
    <property type="match status" value="1"/>
</dbReference>
<dbReference type="InterPro" id="IPR003780">
    <property type="entry name" value="COX15/CtaA_fam"/>
</dbReference>
<dbReference type="InterPro" id="IPR023754">
    <property type="entry name" value="HemeA_Synthase_type2"/>
</dbReference>
<dbReference type="PANTHER" id="PTHR23289">
    <property type="entry name" value="CYTOCHROME C OXIDASE ASSEMBLY PROTEIN COX15"/>
    <property type="match status" value="1"/>
</dbReference>
<dbReference type="PANTHER" id="PTHR23289:SF2">
    <property type="entry name" value="CYTOCHROME C OXIDASE ASSEMBLY PROTEIN COX15 HOMOLOG"/>
    <property type="match status" value="1"/>
</dbReference>
<dbReference type="Pfam" id="PF02628">
    <property type="entry name" value="COX15-CtaA"/>
    <property type="match status" value="1"/>
</dbReference>
<reference key="1">
    <citation type="journal article" date="2005" name="Science">
        <title>Genome streamlining in a cosmopolitan oceanic bacterium.</title>
        <authorList>
            <person name="Giovannoni S.J."/>
            <person name="Tripp H.J."/>
            <person name="Givan S."/>
            <person name="Podar M."/>
            <person name="Vergin K.L."/>
            <person name="Baptista D."/>
            <person name="Bibbs L."/>
            <person name="Eads J."/>
            <person name="Richardson T.H."/>
            <person name="Noordewier M."/>
            <person name="Rappe M.S."/>
            <person name="Short J.M."/>
            <person name="Carrington J.C."/>
            <person name="Mathur E.J."/>
        </authorList>
    </citation>
    <scope>NUCLEOTIDE SEQUENCE [LARGE SCALE GENOMIC DNA]</scope>
    <source>
        <strain>HTCC1062</strain>
    </source>
</reference>
<organism>
    <name type="scientific">Pelagibacter ubique (strain HTCC1062)</name>
    <dbReference type="NCBI Taxonomy" id="335992"/>
    <lineage>
        <taxon>Bacteria</taxon>
        <taxon>Pseudomonadati</taxon>
        <taxon>Pseudomonadota</taxon>
        <taxon>Alphaproteobacteria</taxon>
        <taxon>Candidatus Pelagibacterales</taxon>
        <taxon>Candidatus Pelagibacteraceae</taxon>
        <taxon>Candidatus Pelagibacter</taxon>
    </lineage>
</organism>